<keyword id="KW-0328">Glycosyltransferase</keyword>
<keyword id="KW-1185">Reference proteome</keyword>
<keyword id="KW-0808">Transferase</keyword>
<feature type="chain" id="PRO_0000122498" description="Alpha,alpha-trehalose-phosphate synthase [UDP-forming] 56 kDa subunit">
    <location>
        <begin position="1"/>
        <end position="488"/>
    </location>
</feature>
<feature type="binding site" evidence="1">
    <location>
        <position position="102"/>
    </location>
    <ligand>
        <name>D-glucose 6-phosphate</name>
        <dbReference type="ChEBI" id="CHEBI:61548"/>
    </ligand>
</feature>
<feature type="binding site" evidence="1">
    <location>
        <position position="156"/>
    </location>
    <ligand>
        <name>D-glucose 6-phosphate</name>
        <dbReference type="ChEBI" id="CHEBI:61548"/>
    </ligand>
</feature>
<feature type="binding site" evidence="1">
    <location>
        <position position="293"/>
    </location>
    <ligand>
        <name>UDP</name>
        <dbReference type="ChEBI" id="CHEBI:58223"/>
    </ligand>
</feature>
<feature type="binding site" evidence="1">
    <location>
        <position position="293"/>
    </location>
    <ligand>
        <name>UDP-alpha-D-glucose</name>
        <dbReference type="ChEBI" id="CHEBI:58885"/>
    </ligand>
</feature>
<feature type="binding site" evidence="1">
    <location>
        <position position="298"/>
    </location>
    <ligand>
        <name>UDP</name>
        <dbReference type="ChEBI" id="CHEBI:58223"/>
    </ligand>
</feature>
<feature type="binding site" evidence="1">
    <location>
        <position position="298"/>
    </location>
    <ligand>
        <name>UDP-alpha-D-glucose</name>
        <dbReference type="ChEBI" id="CHEBI:58885"/>
    </ligand>
</feature>
<feature type="binding site" evidence="1">
    <location>
        <position position="331"/>
    </location>
    <ligand>
        <name>D-glucose 6-phosphate</name>
        <dbReference type="ChEBI" id="CHEBI:61548"/>
    </ligand>
</feature>
<feature type="binding site" evidence="1">
    <location>
        <position position="370"/>
    </location>
    <ligand>
        <name>UDP</name>
        <dbReference type="ChEBI" id="CHEBI:58223"/>
    </ligand>
</feature>
<feature type="binding site" evidence="1">
    <location>
        <position position="370"/>
    </location>
    <ligand>
        <name>UDP-alpha-D-glucose</name>
        <dbReference type="ChEBI" id="CHEBI:58885"/>
    </ligand>
</feature>
<feature type="binding site" evidence="1">
    <location>
        <begin position="392"/>
        <end position="400"/>
    </location>
    <ligand>
        <name>UDP-alpha-D-glucose</name>
        <dbReference type="ChEBI" id="CHEBI:58885"/>
    </ligand>
</feature>
<feature type="binding site" evidence="1">
    <location>
        <begin position="396"/>
        <end position="400"/>
    </location>
    <ligand>
        <name>UDP</name>
        <dbReference type="ChEBI" id="CHEBI:58223"/>
    </ligand>
</feature>
<proteinExistence type="evidence at protein level"/>
<accession>Q07158</accession>
<reference key="1">
    <citation type="journal article" date="1993" name="Eur. J. Biochem.">
        <title>Disruption of the Kluyveromyces lactis GGS1 gene causes inability to grow on glucose and fructose and is suppressed by mutations that reduce sugar uptake.</title>
        <authorList>
            <person name="Luyten K."/>
            <person name="de Koning W."/>
            <person name="Tesseur I."/>
            <person name="Ruiz M.C."/>
            <person name="Ramos J."/>
            <person name="Cobbaert P."/>
            <person name="Thevelein J.M."/>
            <person name="Hohmann S."/>
        </authorList>
    </citation>
    <scope>NUCLEOTIDE SEQUENCE [GENOMIC DNA]</scope>
    <scope>FUNCTION</scope>
    <scope>CATALYTIC ACTIVITY</scope>
    <source>
        <strain>ATCC 8585 / CBS 2359 / DSM 70799 / NBRC 1267 / NRRL Y-1140 / WM37</strain>
    </source>
</reference>
<reference key="2">
    <citation type="journal article" date="2004" name="Nature">
        <title>Genome evolution in yeasts.</title>
        <authorList>
            <person name="Dujon B."/>
            <person name="Sherman D."/>
            <person name="Fischer G."/>
            <person name="Durrens P."/>
            <person name="Casaregola S."/>
            <person name="Lafontaine I."/>
            <person name="de Montigny J."/>
            <person name="Marck C."/>
            <person name="Neuveglise C."/>
            <person name="Talla E."/>
            <person name="Goffard N."/>
            <person name="Frangeul L."/>
            <person name="Aigle M."/>
            <person name="Anthouard V."/>
            <person name="Babour A."/>
            <person name="Barbe V."/>
            <person name="Barnay S."/>
            <person name="Blanchin S."/>
            <person name="Beckerich J.-M."/>
            <person name="Beyne E."/>
            <person name="Bleykasten C."/>
            <person name="Boisrame A."/>
            <person name="Boyer J."/>
            <person name="Cattolico L."/>
            <person name="Confanioleri F."/>
            <person name="de Daruvar A."/>
            <person name="Despons L."/>
            <person name="Fabre E."/>
            <person name="Fairhead C."/>
            <person name="Ferry-Dumazet H."/>
            <person name="Groppi A."/>
            <person name="Hantraye F."/>
            <person name="Hennequin C."/>
            <person name="Jauniaux N."/>
            <person name="Joyet P."/>
            <person name="Kachouri R."/>
            <person name="Kerrest A."/>
            <person name="Koszul R."/>
            <person name="Lemaire M."/>
            <person name="Lesur I."/>
            <person name="Ma L."/>
            <person name="Muller H."/>
            <person name="Nicaud J.-M."/>
            <person name="Nikolski M."/>
            <person name="Oztas S."/>
            <person name="Ozier-Kalogeropoulos O."/>
            <person name="Pellenz S."/>
            <person name="Potier S."/>
            <person name="Richard G.-F."/>
            <person name="Straub M.-L."/>
            <person name="Suleau A."/>
            <person name="Swennen D."/>
            <person name="Tekaia F."/>
            <person name="Wesolowski-Louvel M."/>
            <person name="Westhof E."/>
            <person name="Wirth B."/>
            <person name="Zeniou-Meyer M."/>
            <person name="Zivanovic Y."/>
            <person name="Bolotin-Fukuhara M."/>
            <person name="Thierry A."/>
            <person name="Bouchier C."/>
            <person name="Caudron B."/>
            <person name="Scarpelli C."/>
            <person name="Gaillardin C."/>
            <person name="Weissenbach J."/>
            <person name="Wincker P."/>
            <person name="Souciet J.-L."/>
        </authorList>
    </citation>
    <scope>NUCLEOTIDE SEQUENCE [LARGE SCALE GENOMIC DNA]</scope>
    <source>
        <strain>ATCC 8585 / CBS 2359 / DSM 70799 / NBRC 1267 / NRRL Y-1140 / WM37</strain>
    </source>
</reference>
<dbReference type="EC" id="2.4.1.15" evidence="5"/>
<dbReference type="EMBL" id="X72499">
    <property type="protein sequence ID" value="CAA51164.1"/>
    <property type="molecule type" value="Genomic_DNA"/>
</dbReference>
<dbReference type="EMBL" id="CR382122">
    <property type="protein sequence ID" value="CAH02314.1"/>
    <property type="molecule type" value="Genomic_DNA"/>
</dbReference>
<dbReference type="PIR" id="S38987">
    <property type="entry name" value="S38987"/>
</dbReference>
<dbReference type="RefSeq" id="XP_451921.1">
    <property type="nucleotide sequence ID" value="XM_451921.1"/>
</dbReference>
<dbReference type="SMR" id="Q07158"/>
<dbReference type="FunCoup" id="Q07158">
    <property type="interactions" value="656"/>
</dbReference>
<dbReference type="STRING" id="284590.Q07158"/>
<dbReference type="CAZy" id="GT20">
    <property type="family name" value="Glycosyltransferase Family 20"/>
</dbReference>
<dbReference type="PaxDb" id="284590-Q07158"/>
<dbReference type="KEGG" id="kla:KLLA0_B08822g"/>
<dbReference type="eggNOG" id="KOG1050">
    <property type="taxonomic scope" value="Eukaryota"/>
</dbReference>
<dbReference type="HOGENOM" id="CLU_002351_7_2_1"/>
<dbReference type="InParanoid" id="Q07158"/>
<dbReference type="OMA" id="NRTIWPL"/>
<dbReference type="Proteomes" id="UP000000598">
    <property type="component" value="Chromosome B"/>
</dbReference>
<dbReference type="GO" id="GO:0005946">
    <property type="term" value="C:alpha,alpha-trehalose-phosphate synthase complex (UDP-forming)"/>
    <property type="evidence" value="ECO:0007669"/>
    <property type="project" value="TreeGrafter"/>
</dbReference>
<dbReference type="GO" id="GO:0005829">
    <property type="term" value="C:cytosol"/>
    <property type="evidence" value="ECO:0007669"/>
    <property type="project" value="TreeGrafter"/>
</dbReference>
<dbReference type="GO" id="GO:0003825">
    <property type="term" value="F:alpha,alpha-trehalose-phosphate synthase (UDP-forming) activity"/>
    <property type="evidence" value="ECO:0007669"/>
    <property type="project" value="UniProtKB-EC"/>
</dbReference>
<dbReference type="GO" id="GO:0004805">
    <property type="term" value="F:trehalose-phosphatase activity"/>
    <property type="evidence" value="ECO:0007669"/>
    <property type="project" value="TreeGrafter"/>
</dbReference>
<dbReference type="GO" id="GO:0034605">
    <property type="term" value="P:cellular response to heat"/>
    <property type="evidence" value="ECO:0007669"/>
    <property type="project" value="TreeGrafter"/>
</dbReference>
<dbReference type="GO" id="GO:0005992">
    <property type="term" value="P:trehalose biosynthetic process"/>
    <property type="evidence" value="ECO:0007669"/>
    <property type="project" value="InterPro"/>
</dbReference>
<dbReference type="CDD" id="cd03788">
    <property type="entry name" value="GT20_TPS"/>
    <property type="match status" value="1"/>
</dbReference>
<dbReference type="FunFam" id="3.40.50.2000:FF:000007">
    <property type="entry name" value="Trehalose-6-phosphate synthase"/>
    <property type="match status" value="1"/>
</dbReference>
<dbReference type="FunFam" id="3.40.50.2000:FF:000035">
    <property type="entry name" value="Trehalose-6-phosphate synthase"/>
    <property type="match status" value="1"/>
</dbReference>
<dbReference type="Gene3D" id="3.40.50.2000">
    <property type="entry name" value="Glycogen Phosphorylase B"/>
    <property type="match status" value="2"/>
</dbReference>
<dbReference type="InterPro" id="IPR001830">
    <property type="entry name" value="Glyco_trans_20"/>
</dbReference>
<dbReference type="InterPro" id="IPR012766">
    <property type="entry name" value="Trehalose_OtsA"/>
</dbReference>
<dbReference type="NCBIfam" id="TIGR02400">
    <property type="entry name" value="trehalose_OtsA"/>
    <property type="match status" value="1"/>
</dbReference>
<dbReference type="PANTHER" id="PTHR10788:SF106">
    <property type="entry name" value="BCDNA.GH08860"/>
    <property type="match status" value="1"/>
</dbReference>
<dbReference type="PANTHER" id="PTHR10788">
    <property type="entry name" value="TREHALOSE-6-PHOSPHATE SYNTHASE"/>
    <property type="match status" value="1"/>
</dbReference>
<dbReference type="Pfam" id="PF00982">
    <property type="entry name" value="Glyco_transf_20"/>
    <property type="match status" value="1"/>
</dbReference>
<dbReference type="SUPFAM" id="SSF53756">
    <property type="entry name" value="UDP-Glycosyltransferase/glycogen phosphorylase"/>
    <property type="match status" value="1"/>
</dbReference>
<evidence type="ECO:0000250" key="1">
    <source>
        <dbReference type="UniProtKB" id="Q92410"/>
    </source>
</evidence>
<evidence type="ECO:0000269" key="2">
    <source>
    </source>
</evidence>
<evidence type="ECO:0000303" key="3">
    <source>
    </source>
</evidence>
<evidence type="ECO:0000305" key="4"/>
<evidence type="ECO:0000305" key="5">
    <source>
    </source>
</evidence>
<protein>
    <recommendedName>
        <fullName>Alpha,alpha-trehalose-phosphate synthase [UDP-forming] 56 kDa subunit</fullName>
        <ecNumber evidence="5">2.4.1.15</ecNumber>
    </recommendedName>
    <alternativeName>
        <fullName>Trehalose-6-phosphate synthase</fullName>
    </alternativeName>
    <alternativeName>
        <fullName>UDP-glucose-glucosephosphate glucosyltransferase</fullName>
    </alternativeName>
</protein>
<organism>
    <name type="scientific">Kluyveromyces lactis (strain ATCC 8585 / CBS 2359 / DSM 70799 / NBRC 1267 / NRRL Y-1140 / WM37)</name>
    <name type="common">Yeast</name>
    <name type="synonym">Candida sphaerica</name>
    <dbReference type="NCBI Taxonomy" id="284590"/>
    <lineage>
        <taxon>Eukaryota</taxon>
        <taxon>Fungi</taxon>
        <taxon>Dikarya</taxon>
        <taxon>Ascomycota</taxon>
        <taxon>Saccharomycotina</taxon>
        <taxon>Saccharomycetes</taxon>
        <taxon>Saccharomycetales</taxon>
        <taxon>Saccharomycetaceae</taxon>
        <taxon>Kluyveromyces</taxon>
    </lineage>
</organism>
<comment type="function">
    <text evidence="2">Synthase catalytic subunit of the trehalose synthase complex that catalyzes the production of trehalose from glucose-6-phosphate and UDP-alpha-D-glucose in a two step process. Can function independently of the complex.</text>
</comment>
<comment type="catalytic activity">
    <reaction evidence="5">
        <text>D-glucose 6-phosphate + UDP-alpha-D-glucose = alpha,alpha-trehalose 6-phosphate + UDP + H(+)</text>
        <dbReference type="Rhea" id="RHEA:18889"/>
        <dbReference type="ChEBI" id="CHEBI:15378"/>
        <dbReference type="ChEBI" id="CHEBI:58223"/>
        <dbReference type="ChEBI" id="CHEBI:58429"/>
        <dbReference type="ChEBI" id="CHEBI:58885"/>
        <dbReference type="ChEBI" id="CHEBI:61548"/>
        <dbReference type="EC" id="2.4.1.15"/>
    </reaction>
</comment>
<comment type="pathway">
    <text evidence="4">Carbohydrate biosynthesis.</text>
</comment>
<comment type="subunit">
    <text>Trehalose synthase/phosphatase complex contains three or four polypeptides of 56 kDa (TPS1), 102 kDa (TPS2), 115 kDa (TPS3) and 123 kDa (TSL1).</text>
</comment>
<comment type="similarity">
    <text evidence="4">Belongs to the glycosyltransferase 20 family.</text>
</comment>
<gene>
    <name evidence="3" type="primary">TPS1</name>
    <name evidence="3" type="synonym">GGS1</name>
    <name type="ordered locus">KLLA0B08822g</name>
</gene>
<sequence length="488" mass="55356">MVNQDISKLSLNECPGSVIVISNRLPVTIKKDEKTGEYEYSMSSGGLVTALQGLKKSTTFQWYGWPGLEVPDEDKAKVKRELLEKFNAIPIFLSDEVADLHYNGFSNSILWPLFHYHPGEITFDDTAWLAYNEANMAFADEIEGNINDNDVVWVHDYHLMLLPEMIRQRVIAKKLKNIKIGWFLHTPFPSSEIYRILPVRQEILKGVLSCDLIGFHTYDYARHFLSAVQRILNVNTLPNGVEFDGRFVNVGAFPIGIDVETFTEGLKQDAVIKRIKELKESFKGCKIIIGVDRLDYIKGVPQKLHALEVFLGAHPEWIGKVVLVQVAVPSRGDVEEYQYLRSVVNELVGRINGQFGTAEFVPIHFMHRSIPFQELISLYAVSDVCLVSSTRDGMNLVSYEYISCQEEKKGTLILSEFTGAAQSLNGALIVNPWNTDDLAESINEALTVPEEKRAANWEKLYKYISKYTSAFWGENFVHELYRLGSSNN</sequence>
<name>TPS1_KLULA</name>